<gene>
    <name evidence="3" type="primary">KATNA1</name>
</gene>
<proteinExistence type="evidence at protein level"/>
<sequence>MSLLMISENVKLAREYALLGNYDSAMVYYQGVLDQMNKYLYSVKDTYLQQKWQQVWQEINVEAKHVKDIMKTLESFKLDSTPLKAAQHDLPASEGEVWSMPVPVERRPSPGPRKRQSSQYSDPKSHGNRPSTTVRVHRSSAQNVHNDRGKAVRCREKKEQNKGREEKNKSPAAVTEPETNKFDSTGYDKDLVEALERDIISQNPNVRWDDIADLVEAKKLLKEAVVLPMWMPEFFKGIRRPWKGVLMVGPPGTGKTLLAKAVATECKTTFFNVSSSTLTSKYRGESEKLVRLLFEMARFYSPATIFIDEIDSICSRRGTSEEHEASRRVKAELLVQMDGVGGTSENDDPSKMVMVLAATNFPWDIDEALRRRLEKRIYIPLPSAKGREELLRISLRELELADDVDLASIAENMEGYSGADITNVCRDASLMAMRRRIEGLTPEEIRNLSKEEMHMPTTMEDFEMALKKVSKSVSAADIERYEKWIFEFGSC</sequence>
<evidence type="ECO:0000250" key="1"/>
<evidence type="ECO:0000250" key="2">
    <source>
        <dbReference type="UniProtKB" id="Q9WV86"/>
    </source>
</evidence>
<evidence type="ECO:0000255" key="3">
    <source>
        <dbReference type="HAMAP-Rule" id="MF_03023"/>
    </source>
</evidence>
<evidence type="ECO:0000256" key="4">
    <source>
        <dbReference type="SAM" id="MobiDB-lite"/>
    </source>
</evidence>
<evidence type="ECO:0000269" key="5">
    <source>
    </source>
</evidence>
<evidence type="ECO:0000269" key="6">
    <source>
    </source>
</evidence>
<evidence type="ECO:0000269" key="7">
    <source>
    </source>
</evidence>
<evidence type="ECO:0000269" key="8">
    <source>
    </source>
</evidence>
<evidence type="ECO:0000269" key="9">
    <source>
    </source>
</evidence>
<evidence type="ECO:0000269" key="10">
    <source>
    </source>
</evidence>
<evidence type="ECO:0000269" key="11">
    <source>
    </source>
</evidence>
<evidence type="ECO:0000269" key="12">
    <source>
    </source>
</evidence>
<evidence type="ECO:0000303" key="13">
    <source>
    </source>
</evidence>
<evidence type="ECO:0007744" key="14">
    <source>
    </source>
</evidence>
<evidence type="ECO:0007744" key="15">
    <source>
    </source>
</evidence>
<evidence type="ECO:0007744" key="16">
    <source>
    </source>
</evidence>
<evidence type="ECO:0007829" key="17">
    <source>
        <dbReference type="PDB" id="5ZQL"/>
    </source>
</evidence>
<evidence type="ECO:0007829" key="18">
    <source>
        <dbReference type="PDB" id="5ZQM"/>
    </source>
</evidence>
<dbReference type="EC" id="5.6.1.1" evidence="3"/>
<dbReference type="EMBL" id="AF056022">
    <property type="protein sequence ID" value="AAC25114.1"/>
    <property type="molecule type" value="mRNA"/>
</dbReference>
<dbReference type="EMBL" id="AL078581">
    <property type="status" value="NOT_ANNOTATED_CDS"/>
    <property type="molecule type" value="Genomic_DNA"/>
</dbReference>
<dbReference type="EMBL" id="BX276089">
    <property type="status" value="NOT_ANNOTATED_CDS"/>
    <property type="molecule type" value="Genomic_DNA"/>
</dbReference>
<dbReference type="EMBL" id="CH471051">
    <property type="protein sequence ID" value="EAW47793.1"/>
    <property type="molecule type" value="Genomic_DNA"/>
</dbReference>
<dbReference type="EMBL" id="CH471051">
    <property type="protein sequence ID" value="EAW47795.1"/>
    <property type="molecule type" value="Genomic_DNA"/>
</dbReference>
<dbReference type="EMBL" id="BC050428">
    <property type="protein sequence ID" value="AAH50428.1"/>
    <property type="molecule type" value="mRNA"/>
</dbReference>
<dbReference type="CCDS" id="CCDS5217.1">
    <molecule id="O75449-1"/>
</dbReference>
<dbReference type="CCDS" id="CCDS56456.1">
    <molecule id="O75449-2"/>
</dbReference>
<dbReference type="RefSeq" id="NP_001191005.1">
    <molecule id="O75449-2"/>
    <property type="nucleotide sequence ID" value="NM_001204076.2"/>
</dbReference>
<dbReference type="RefSeq" id="NP_008975.1">
    <molecule id="O75449-1"/>
    <property type="nucleotide sequence ID" value="NM_007044.4"/>
</dbReference>
<dbReference type="RefSeq" id="XP_005266861.1">
    <molecule id="O75449-1"/>
    <property type="nucleotide sequence ID" value="XM_005266804.3"/>
</dbReference>
<dbReference type="RefSeq" id="XP_016865696.1">
    <molecule id="O75449-1"/>
    <property type="nucleotide sequence ID" value="XM_017010207.3"/>
</dbReference>
<dbReference type="RefSeq" id="XP_016865699.1">
    <molecule id="O75449-1"/>
    <property type="nucleotide sequence ID" value="XM_017010210.3"/>
</dbReference>
<dbReference type="RefSeq" id="XP_054210071.1">
    <molecule id="O75449-1"/>
    <property type="nucleotide sequence ID" value="XM_054354096.1"/>
</dbReference>
<dbReference type="RefSeq" id="XP_054210072.1">
    <molecule id="O75449-1"/>
    <property type="nucleotide sequence ID" value="XM_054354097.1"/>
</dbReference>
<dbReference type="RefSeq" id="XP_054210074.1">
    <molecule id="O75449-1"/>
    <property type="nucleotide sequence ID" value="XM_054354099.1"/>
</dbReference>
<dbReference type="PDB" id="5ZQL">
    <property type="method" value="X-ray"/>
    <property type="resolution" value="3.01 A"/>
    <property type="chains" value="A/B=183-491"/>
</dbReference>
<dbReference type="PDB" id="5ZQM">
    <property type="method" value="X-ray"/>
    <property type="resolution" value="2.90 A"/>
    <property type="chains" value="A=183-489"/>
</dbReference>
<dbReference type="PDBsum" id="5ZQL"/>
<dbReference type="PDBsum" id="5ZQM"/>
<dbReference type="SMR" id="O75449"/>
<dbReference type="BioGRID" id="116285">
    <property type="interactions" value="69"/>
</dbReference>
<dbReference type="ComplexPortal" id="CPX-6365">
    <property type="entry name" value="Katanin complex, KATNA1-KATNB1 variant"/>
</dbReference>
<dbReference type="ComplexPortal" id="CPX-6366">
    <property type="entry name" value="Katanin complex, KATNA1-KATNBL1 variant"/>
</dbReference>
<dbReference type="CORUM" id="O75449"/>
<dbReference type="FunCoup" id="O75449">
    <property type="interactions" value="1286"/>
</dbReference>
<dbReference type="IntAct" id="O75449">
    <property type="interactions" value="59"/>
</dbReference>
<dbReference type="STRING" id="9606.ENSP00000356381"/>
<dbReference type="ChEMBL" id="CHEMBL3879856"/>
<dbReference type="GlyGen" id="O75449">
    <property type="glycosylation" value="2 sites, 1 O-linked glycan (1 site)"/>
</dbReference>
<dbReference type="iPTMnet" id="O75449"/>
<dbReference type="PhosphoSitePlus" id="O75449"/>
<dbReference type="BioMuta" id="KATNA1"/>
<dbReference type="jPOST" id="O75449"/>
<dbReference type="MassIVE" id="O75449"/>
<dbReference type="PaxDb" id="9606-ENSP00000356381"/>
<dbReference type="PeptideAtlas" id="O75449"/>
<dbReference type="ProteomicsDB" id="50017">
    <molecule id="O75449-1"/>
</dbReference>
<dbReference type="ProteomicsDB" id="50018">
    <molecule id="O75449-2"/>
</dbReference>
<dbReference type="Pumba" id="O75449"/>
<dbReference type="Antibodypedia" id="33275">
    <property type="antibodies" value="212 antibodies from 26 providers"/>
</dbReference>
<dbReference type="DNASU" id="11104"/>
<dbReference type="Ensembl" id="ENST00000335643.12">
    <molecule id="O75449-2"/>
    <property type="protein sequence ID" value="ENSP00000335180.8"/>
    <property type="gene ID" value="ENSG00000186625.14"/>
</dbReference>
<dbReference type="Ensembl" id="ENST00000335647.9">
    <molecule id="O75449-1"/>
    <property type="protein sequence ID" value="ENSP00000335106.5"/>
    <property type="gene ID" value="ENSG00000186625.14"/>
</dbReference>
<dbReference type="Ensembl" id="ENST00000367411.7">
    <molecule id="O75449-1"/>
    <property type="protein sequence ID" value="ENSP00000356381.2"/>
    <property type="gene ID" value="ENSG00000186625.14"/>
</dbReference>
<dbReference type="GeneID" id="11104"/>
<dbReference type="KEGG" id="hsa:11104"/>
<dbReference type="MANE-Select" id="ENST00000367411.7">
    <property type="protein sequence ID" value="ENSP00000356381.2"/>
    <property type="RefSeq nucleotide sequence ID" value="NM_007044.4"/>
    <property type="RefSeq protein sequence ID" value="NP_008975.1"/>
</dbReference>
<dbReference type="UCSC" id="uc003qmr.3">
    <molecule id="O75449-1"/>
    <property type="organism name" value="human"/>
</dbReference>
<dbReference type="AGR" id="HGNC:6216"/>
<dbReference type="CTD" id="11104"/>
<dbReference type="DisGeNET" id="11104"/>
<dbReference type="GeneCards" id="KATNA1"/>
<dbReference type="HGNC" id="HGNC:6216">
    <property type="gene designation" value="KATNA1"/>
</dbReference>
<dbReference type="HPA" id="ENSG00000186625">
    <property type="expression patterns" value="Low tissue specificity"/>
</dbReference>
<dbReference type="MIM" id="606696">
    <property type="type" value="gene"/>
</dbReference>
<dbReference type="neXtProt" id="NX_O75449"/>
<dbReference type="OpenTargets" id="ENSG00000186625"/>
<dbReference type="PharmGKB" id="PA30017"/>
<dbReference type="VEuPathDB" id="HostDB:ENSG00000186625"/>
<dbReference type="eggNOG" id="KOG0738">
    <property type="taxonomic scope" value="Eukaryota"/>
</dbReference>
<dbReference type="GeneTree" id="ENSGT00940000156638"/>
<dbReference type="HOGENOM" id="CLU_000688_21_1_1"/>
<dbReference type="InParanoid" id="O75449"/>
<dbReference type="OMA" id="PRDEMHM"/>
<dbReference type="OrthoDB" id="5334845at2759"/>
<dbReference type="PAN-GO" id="O75449">
    <property type="GO annotations" value="2 GO annotations based on evolutionary models"/>
</dbReference>
<dbReference type="PhylomeDB" id="O75449"/>
<dbReference type="TreeFam" id="TF323170"/>
<dbReference type="BRENDA" id="5.6.1.1">
    <property type="organism ID" value="2681"/>
</dbReference>
<dbReference type="PathwayCommons" id="O75449"/>
<dbReference type="SignaLink" id="O75449"/>
<dbReference type="SIGNOR" id="O75449"/>
<dbReference type="BioGRID-ORCS" id="11104">
    <property type="hits" value="18 hits in 1157 CRISPR screens"/>
</dbReference>
<dbReference type="CD-CODE" id="8C2F96ED">
    <property type="entry name" value="Centrosome"/>
</dbReference>
<dbReference type="ChiTaRS" id="KATNA1">
    <property type="organism name" value="human"/>
</dbReference>
<dbReference type="GeneWiki" id="KATNA1"/>
<dbReference type="GenomeRNAi" id="11104"/>
<dbReference type="Pharos" id="O75449">
    <property type="development level" value="Tbio"/>
</dbReference>
<dbReference type="PRO" id="PR:O75449"/>
<dbReference type="Proteomes" id="UP000005640">
    <property type="component" value="Chromosome 6"/>
</dbReference>
<dbReference type="RNAct" id="O75449">
    <property type="molecule type" value="protein"/>
</dbReference>
<dbReference type="Bgee" id="ENSG00000186625">
    <property type="expression patterns" value="Expressed in sperm and 193 other cell types or tissues"/>
</dbReference>
<dbReference type="ExpressionAtlas" id="O75449">
    <property type="expression patterns" value="baseline and differential"/>
</dbReference>
<dbReference type="GO" id="GO:0005813">
    <property type="term" value="C:centrosome"/>
    <property type="evidence" value="ECO:0007669"/>
    <property type="project" value="UniProtKB-SubCell"/>
</dbReference>
<dbReference type="GO" id="GO:0005737">
    <property type="term" value="C:cytoplasm"/>
    <property type="evidence" value="ECO:0000314"/>
    <property type="project" value="UniProtKB"/>
</dbReference>
<dbReference type="GO" id="GO:0008352">
    <property type="term" value="C:katanin complex"/>
    <property type="evidence" value="ECO:0000353"/>
    <property type="project" value="ComplexPortal"/>
</dbReference>
<dbReference type="GO" id="GO:0005874">
    <property type="term" value="C:microtubule"/>
    <property type="evidence" value="ECO:0007669"/>
    <property type="project" value="UniProtKB-KW"/>
</dbReference>
<dbReference type="GO" id="GO:0015630">
    <property type="term" value="C:microtubule cytoskeleton"/>
    <property type="evidence" value="ECO:0000318"/>
    <property type="project" value="GO_Central"/>
</dbReference>
<dbReference type="GO" id="GO:0030496">
    <property type="term" value="C:midbody"/>
    <property type="evidence" value="ECO:0000314"/>
    <property type="project" value="UniProtKB"/>
</dbReference>
<dbReference type="GO" id="GO:0097431">
    <property type="term" value="C:mitotic spindle pole"/>
    <property type="evidence" value="ECO:0000314"/>
    <property type="project" value="UniProtKB"/>
</dbReference>
<dbReference type="GO" id="GO:0005819">
    <property type="term" value="C:spindle"/>
    <property type="evidence" value="ECO:0000314"/>
    <property type="project" value="UniProtKB"/>
</dbReference>
<dbReference type="GO" id="GO:0000922">
    <property type="term" value="C:spindle pole"/>
    <property type="evidence" value="ECO:0000314"/>
    <property type="project" value="UniProtKB"/>
</dbReference>
<dbReference type="GO" id="GO:0005524">
    <property type="term" value="F:ATP binding"/>
    <property type="evidence" value="ECO:0007669"/>
    <property type="project" value="UniProtKB-KW"/>
</dbReference>
<dbReference type="GO" id="GO:0016887">
    <property type="term" value="F:ATP hydrolysis activity"/>
    <property type="evidence" value="ECO:0000318"/>
    <property type="project" value="GO_Central"/>
</dbReference>
<dbReference type="GO" id="GO:0008017">
    <property type="term" value="F:microtubule binding"/>
    <property type="evidence" value="ECO:0000314"/>
    <property type="project" value="UniProtKB"/>
</dbReference>
<dbReference type="GO" id="GO:0008568">
    <property type="term" value="F:microtubule severing ATPase activity"/>
    <property type="evidence" value="ECO:0000314"/>
    <property type="project" value="UniProtKB"/>
</dbReference>
<dbReference type="GO" id="GO:0046982">
    <property type="term" value="F:protein heterodimerization activity"/>
    <property type="evidence" value="ECO:0000353"/>
    <property type="project" value="UniProtKB"/>
</dbReference>
<dbReference type="GO" id="GO:0051301">
    <property type="term" value="P:cell division"/>
    <property type="evidence" value="ECO:0007669"/>
    <property type="project" value="UniProtKB-KW"/>
</dbReference>
<dbReference type="GO" id="GO:0031122">
    <property type="term" value="P:cytoplasmic microtubule organization"/>
    <property type="evidence" value="ECO:0000314"/>
    <property type="project" value="ComplexPortal"/>
</dbReference>
<dbReference type="GO" id="GO:0051013">
    <property type="term" value="P:microtubule severing"/>
    <property type="evidence" value="ECO:0000318"/>
    <property type="project" value="GO_Central"/>
</dbReference>
<dbReference type="CDD" id="cd21748">
    <property type="entry name" value="Kp60-NTD"/>
    <property type="match status" value="1"/>
</dbReference>
<dbReference type="CDD" id="cd19522">
    <property type="entry name" value="RecA-like_KTNA1"/>
    <property type="match status" value="1"/>
</dbReference>
<dbReference type="FunFam" id="1.10.8.60:FF:000025">
    <property type="entry name" value="Katanin p60 ATPase-containing subunit A1"/>
    <property type="match status" value="1"/>
</dbReference>
<dbReference type="FunFam" id="1.20.58.80:FF:000003">
    <property type="entry name" value="Katanin p60 ATPase-containing subunit A1"/>
    <property type="match status" value="1"/>
</dbReference>
<dbReference type="FunFam" id="3.40.50.300:FF:000159">
    <property type="entry name" value="Katanin p60 ATPase-containing subunit A1"/>
    <property type="match status" value="1"/>
</dbReference>
<dbReference type="Gene3D" id="1.10.8.60">
    <property type="match status" value="1"/>
</dbReference>
<dbReference type="Gene3D" id="3.40.50.300">
    <property type="entry name" value="P-loop containing nucleotide triphosphate hydrolases"/>
    <property type="match status" value="1"/>
</dbReference>
<dbReference type="Gene3D" id="1.20.58.80">
    <property type="entry name" value="Phosphotransferase system, lactose/cellobiose-type IIA subunit"/>
    <property type="match status" value="1"/>
</dbReference>
<dbReference type="HAMAP" id="MF_03023">
    <property type="entry name" value="Katanin_p60_A1"/>
    <property type="match status" value="1"/>
</dbReference>
<dbReference type="InterPro" id="IPR003593">
    <property type="entry name" value="AAA+_ATPase"/>
</dbReference>
<dbReference type="InterPro" id="IPR041569">
    <property type="entry name" value="AAA_lid_3"/>
</dbReference>
<dbReference type="InterPro" id="IPR003959">
    <property type="entry name" value="ATPase_AAA_core"/>
</dbReference>
<dbReference type="InterPro" id="IPR003960">
    <property type="entry name" value="ATPase_AAA_CS"/>
</dbReference>
<dbReference type="InterPro" id="IPR028596">
    <property type="entry name" value="KATNA1"/>
</dbReference>
<dbReference type="InterPro" id="IPR048611">
    <property type="entry name" value="KATNA1_MIT"/>
</dbReference>
<dbReference type="InterPro" id="IPR048612">
    <property type="entry name" value="KTNA1_AAA_dom"/>
</dbReference>
<dbReference type="InterPro" id="IPR050304">
    <property type="entry name" value="MT-severing_AAA_ATPase"/>
</dbReference>
<dbReference type="InterPro" id="IPR027417">
    <property type="entry name" value="P-loop_NTPase"/>
</dbReference>
<dbReference type="InterPro" id="IPR015415">
    <property type="entry name" value="Spast_Vps4_C"/>
</dbReference>
<dbReference type="PANTHER" id="PTHR23074">
    <property type="entry name" value="AAA DOMAIN-CONTAINING"/>
    <property type="match status" value="1"/>
</dbReference>
<dbReference type="PANTHER" id="PTHR23074:SF71">
    <property type="entry name" value="KATANIN P60 ATPASE-CONTAINING SUBUNIT A1"/>
    <property type="match status" value="1"/>
</dbReference>
<dbReference type="Pfam" id="PF00004">
    <property type="entry name" value="AAA"/>
    <property type="match status" value="1"/>
</dbReference>
<dbReference type="Pfam" id="PF17862">
    <property type="entry name" value="AAA_lid_3"/>
    <property type="match status" value="1"/>
</dbReference>
<dbReference type="Pfam" id="PF21126">
    <property type="entry name" value="KATNA1_MIT"/>
    <property type="match status" value="1"/>
</dbReference>
<dbReference type="Pfam" id="PF09336">
    <property type="entry name" value="Vps4_C"/>
    <property type="match status" value="1"/>
</dbReference>
<dbReference type="SMART" id="SM00382">
    <property type="entry name" value="AAA"/>
    <property type="match status" value="1"/>
</dbReference>
<dbReference type="SUPFAM" id="SSF52540">
    <property type="entry name" value="P-loop containing nucleoside triphosphate hydrolases"/>
    <property type="match status" value="1"/>
</dbReference>
<dbReference type="PROSITE" id="PS00674">
    <property type="entry name" value="AAA"/>
    <property type="match status" value="1"/>
</dbReference>
<name>KTNA1_HUMAN</name>
<reference key="1">
    <citation type="journal article" date="1998" name="Mol. Biol. Cell">
        <title>Katanin is responsible for the M-phase microtubule-severing activity in Xenopus eggs.</title>
        <authorList>
            <person name="McNally F.J."/>
            <person name="Thomas S."/>
        </authorList>
    </citation>
    <scope>NUCLEOTIDE SEQUENCE [MRNA] (ISOFORM 1)</scope>
    <scope>SUBCELLULAR LOCATION</scope>
</reference>
<reference key="2">
    <citation type="journal article" date="2003" name="Nature">
        <title>The DNA sequence and analysis of human chromosome 6.</title>
        <authorList>
            <person name="Mungall A.J."/>
            <person name="Palmer S.A."/>
            <person name="Sims S.K."/>
            <person name="Edwards C.A."/>
            <person name="Ashurst J.L."/>
            <person name="Wilming L."/>
            <person name="Jones M.C."/>
            <person name="Horton R."/>
            <person name="Hunt S.E."/>
            <person name="Scott C.E."/>
            <person name="Gilbert J.G.R."/>
            <person name="Clamp M.E."/>
            <person name="Bethel G."/>
            <person name="Milne S."/>
            <person name="Ainscough R."/>
            <person name="Almeida J.P."/>
            <person name="Ambrose K.D."/>
            <person name="Andrews T.D."/>
            <person name="Ashwell R.I.S."/>
            <person name="Babbage A.K."/>
            <person name="Bagguley C.L."/>
            <person name="Bailey J."/>
            <person name="Banerjee R."/>
            <person name="Barker D.J."/>
            <person name="Barlow K.F."/>
            <person name="Bates K."/>
            <person name="Beare D.M."/>
            <person name="Beasley H."/>
            <person name="Beasley O."/>
            <person name="Bird C.P."/>
            <person name="Blakey S.E."/>
            <person name="Bray-Allen S."/>
            <person name="Brook J."/>
            <person name="Brown A.J."/>
            <person name="Brown J.Y."/>
            <person name="Burford D.C."/>
            <person name="Burrill W."/>
            <person name="Burton J."/>
            <person name="Carder C."/>
            <person name="Carter N.P."/>
            <person name="Chapman J.C."/>
            <person name="Clark S.Y."/>
            <person name="Clark G."/>
            <person name="Clee C.M."/>
            <person name="Clegg S."/>
            <person name="Cobley V."/>
            <person name="Collier R.E."/>
            <person name="Collins J.E."/>
            <person name="Colman L.K."/>
            <person name="Corby N.R."/>
            <person name="Coville G.J."/>
            <person name="Culley K.M."/>
            <person name="Dhami P."/>
            <person name="Davies J."/>
            <person name="Dunn M."/>
            <person name="Earthrowl M.E."/>
            <person name="Ellington A.E."/>
            <person name="Evans K.A."/>
            <person name="Faulkner L."/>
            <person name="Francis M.D."/>
            <person name="Frankish A."/>
            <person name="Frankland J."/>
            <person name="French L."/>
            <person name="Garner P."/>
            <person name="Garnett J."/>
            <person name="Ghori M.J."/>
            <person name="Gilby L.M."/>
            <person name="Gillson C.J."/>
            <person name="Glithero R.J."/>
            <person name="Grafham D.V."/>
            <person name="Grant M."/>
            <person name="Gribble S."/>
            <person name="Griffiths C."/>
            <person name="Griffiths M.N.D."/>
            <person name="Hall R."/>
            <person name="Halls K.S."/>
            <person name="Hammond S."/>
            <person name="Harley J.L."/>
            <person name="Hart E.A."/>
            <person name="Heath P.D."/>
            <person name="Heathcott R."/>
            <person name="Holmes S.J."/>
            <person name="Howden P.J."/>
            <person name="Howe K.L."/>
            <person name="Howell G.R."/>
            <person name="Huckle E."/>
            <person name="Humphray S.J."/>
            <person name="Humphries M.D."/>
            <person name="Hunt A.R."/>
            <person name="Johnson C.M."/>
            <person name="Joy A.A."/>
            <person name="Kay M."/>
            <person name="Keenan S.J."/>
            <person name="Kimberley A.M."/>
            <person name="King A."/>
            <person name="Laird G.K."/>
            <person name="Langford C."/>
            <person name="Lawlor S."/>
            <person name="Leongamornlert D.A."/>
            <person name="Leversha M."/>
            <person name="Lloyd C.R."/>
            <person name="Lloyd D.M."/>
            <person name="Loveland J.E."/>
            <person name="Lovell J."/>
            <person name="Martin S."/>
            <person name="Mashreghi-Mohammadi M."/>
            <person name="Maslen G.L."/>
            <person name="Matthews L."/>
            <person name="McCann O.T."/>
            <person name="McLaren S.J."/>
            <person name="McLay K."/>
            <person name="McMurray A."/>
            <person name="Moore M.J.F."/>
            <person name="Mullikin J.C."/>
            <person name="Niblett D."/>
            <person name="Nickerson T."/>
            <person name="Novik K.L."/>
            <person name="Oliver K."/>
            <person name="Overton-Larty E.K."/>
            <person name="Parker A."/>
            <person name="Patel R."/>
            <person name="Pearce A.V."/>
            <person name="Peck A.I."/>
            <person name="Phillimore B.J.C.T."/>
            <person name="Phillips S."/>
            <person name="Plumb R.W."/>
            <person name="Porter K.M."/>
            <person name="Ramsey Y."/>
            <person name="Ranby S.A."/>
            <person name="Rice C.M."/>
            <person name="Ross M.T."/>
            <person name="Searle S.M."/>
            <person name="Sehra H.K."/>
            <person name="Sheridan E."/>
            <person name="Skuce C.D."/>
            <person name="Smith S."/>
            <person name="Smith M."/>
            <person name="Spraggon L."/>
            <person name="Squares S.L."/>
            <person name="Steward C.A."/>
            <person name="Sycamore N."/>
            <person name="Tamlyn-Hall G."/>
            <person name="Tester J."/>
            <person name="Theaker A.J."/>
            <person name="Thomas D.W."/>
            <person name="Thorpe A."/>
            <person name="Tracey A."/>
            <person name="Tromans A."/>
            <person name="Tubby B."/>
            <person name="Wall M."/>
            <person name="Wallis J.M."/>
            <person name="West A.P."/>
            <person name="White S.S."/>
            <person name="Whitehead S.L."/>
            <person name="Whittaker H."/>
            <person name="Wild A."/>
            <person name="Willey D.J."/>
            <person name="Wilmer T.E."/>
            <person name="Wood J.M."/>
            <person name="Wray P.W."/>
            <person name="Wyatt J.C."/>
            <person name="Young L."/>
            <person name="Younger R.M."/>
            <person name="Bentley D.R."/>
            <person name="Coulson A."/>
            <person name="Durbin R.M."/>
            <person name="Hubbard T."/>
            <person name="Sulston J.E."/>
            <person name="Dunham I."/>
            <person name="Rogers J."/>
            <person name="Beck S."/>
        </authorList>
    </citation>
    <scope>NUCLEOTIDE SEQUENCE [LARGE SCALE GENOMIC DNA]</scope>
</reference>
<reference key="3">
    <citation type="submission" date="2005-09" db="EMBL/GenBank/DDBJ databases">
        <authorList>
            <person name="Mural R.J."/>
            <person name="Istrail S."/>
            <person name="Sutton G.G."/>
            <person name="Florea L."/>
            <person name="Halpern A.L."/>
            <person name="Mobarry C.M."/>
            <person name="Lippert R."/>
            <person name="Walenz B."/>
            <person name="Shatkay H."/>
            <person name="Dew I."/>
            <person name="Miller J.R."/>
            <person name="Flanigan M.J."/>
            <person name="Edwards N.J."/>
            <person name="Bolanos R."/>
            <person name="Fasulo D."/>
            <person name="Halldorsson B.V."/>
            <person name="Hannenhalli S."/>
            <person name="Turner R."/>
            <person name="Yooseph S."/>
            <person name="Lu F."/>
            <person name="Nusskern D.R."/>
            <person name="Shue B.C."/>
            <person name="Zheng X.H."/>
            <person name="Zhong F."/>
            <person name="Delcher A.L."/>
            <person name="Huson D.H."/>
            <person name="Kravitz S.A."/>
            <person name="Mouchard L."/>
            <person name="Reinert K."/>
            <person name="Remington K.A."/>
            <person name="Clark A.G."/>
            <person name="Waterman M.S."/>
            <person name="Eichler E.E."/>
            <person name="Adams M.D."/>
            <person name="Hunkapiller M.W."/>
            <person name="Myers E.W."/>
            <person name="Venter J.C."/>
        </authorList>
    </citation>
    <scope>NUCLEOTIDE SEQUENCE [LARGE SCALE GENOMIC DNA]</scope>
</reference>
<reference key="4">
    <citation type="journal article" date="2004" name="Genome Res.">
        <title>The status, quality, and expansion of the NIH full-length cDNA project: the Mammalian Gene Collection (MGC).</title>
        <authorList>
            <consortium name="The MGC Project Team"/>
        </authorList>
    </citation>
    <scope>NUCLEOTIDE SEQUENCE [LARGE SCALE MRNA] (ISOFORM 2)</scope>
    <source>
        <tissue>Brain</tissue>
    </source>
</reference>
<reference key="5">
    <citation type="journal article" date="2000" name="J. Cell Sci.">
        <title>Two domains of p80 katanin regulate microtubule severing and spindle pole targeting by p60 katanin.</title>
        <authorList>
            <person name="McNally K.P."/>
            <person name="Bazirgan O.A."/>
            <person name="McNally F.J."/>
        </authorList>
    </citation>
    <scope>FUNCTION</scope>
    <scope>INTERACTION WITH KATNB1</scope>
    <scope>SUBCELLULAR LOCATION</scope>
    <scope>MUTAGENESIS OF LYS-255; ASP-308 AND GLU-309</scope>
</reference>
<reference key="6">
    <citation type="journal article" date="2002" name="J. Cell Sci.">
        <title>Katanin inhibition prevents the redistribution of gamma-tubulin at mitosis.</title>
        <authorList>
            <person name="Buster D."/>
            <person name="McNally K."/>
            <person name="McNally F.J."/>
        </authorList>
    </citation>
    <scope>FUNCTION</scope>
    <scope>MUTAGENESIS OF LYS-255</scope>
</reference>
<reference key="7">
    <citation type="journal article" date="2008" name="Proc. Natl. Acad. Sci. U.S.A.">
        <title>A quantitative atlas of mitotic phosphorylation.</title>
        <authorList>
            <person name="Dephoure N."/>
            <person name="Zhou C."/>
            <person name="Villen J."/>
            <person name="Beausoleil S.A."/>
            <person name="Bakalarski C.E."/>
            <person name="Elledge S.J."/>
            <person name="Gygi S.P."/>
        </authorList>
    </citation>
    <scope>PHOSPHORYLATION [LARGE SCALE ANALYSIS] AT SER-170</scope>
    <scope>IDENTIFICATION BY MASS SPECTROMETRY [LARGE SCALE ANALYSIS]</scope>
    <source>
        <tissue>Cervix carcinoma</tissue>
    </source>
</reference>
<reference key="8">
    <citation type="journal article" date="2009" name="J. Biol. Chem.">
        <title>The Cul3/Klhdc5 E3 ligase regulates p60/katanin and is required for normal mitosis in mammalian cells.</title>
        <authorList>
            <person name="Cummings C.M."/>
            <person name="Bentley C.A."/>
            <person name="Perdue S.A."/>
            <person name="Baas P.W."/>
            <person name="Singer J.D."/>
        </authorList>
    </citation>
    <scope>UBIQUITINATION BY THE BCR(KLHL42) COMPLEX</scope>
    <scope>SUBCELLULAR LOCATION</scope>
</reference>
<reference key="9">
    <citation type="journal article" date="2009" name="Nat. Cell Biol.">
        <title>Protein kinase DYRK2 is a scaffold that facilitates assembly of an E3 ligase.</title>
        <authorList>
            <person name="Maddika S."/>
            <person name="Chen J."/>
        </authorList>
    </citation>
    <scope>PHOSPHORYLATION AT SER-42; SER-109 AND THR-133 BY DYRK2</scope>
    <scope>FUNCTION AS KATNA1 KINASE</scope>
    <scope>INTERACTION WITH EDVP COMPLEX</scope>
</reference>
<reference key="10">
    <citation type="journal article" date="2011" name="BMC Syst. Biol.">
        <title>Initial characterization of the human central proteome.</title>
        <authorList>
            <person name="Burkard T.R."/>
            <person name="Planyavsky M."/>
            <person name="Kaupe I."/>
            <person name="Breitwieser F.P."/>
            <person name="Buerckstuemmer T."/>
            <person name="Bennett K.L."/>
            <person name="Superti-Furga G."/>
            <person name="Colinge J."/>
        </authorList>
    </citation>
    <scope>IDENTIFICATION BY MASS SPECTROMETRY [LARGE SCALE ANALYSIS]</scope>
</reference>
<reference key="11">
    <citation type="journal article" date="2011" name="Sci. Signal.">
        <title>System-wide temporal characterization of the proteome and phosphoproteome of human embryonic stem cell differentiation.</title>
        <authorList>
            <person name="Rigbolt K.T."/>
            <person name="Prokhorova T.A."/>
            <person name="Akimov V."/>
            <person name="Henningsen J."/>
            <person name="Johansen P.T."/>
            <person name="Kratchmarova I."/>
            <person name="Kassem M."/>
            <person name="Mann M."/>
            <person name="Olsen J.V."/>
            <person name="Blagoev B."/>
        </authorList>
    </citation>
    <scope>PHOSPHORYLATION [LARGE SCALE ANALYSIS] AT SER-170</scope>
    <scope>IDENTIFICATION BY MASS SPECTROMETRY [LARGE SCALE ANALYSIS]</scope>
</reference>
<reference key="12">
    <citation type="journal article" date="2013" name="J. Proteome Res.">
        <title>Toward a comprehensive characterization of a human cancer cell phosphoproteome.</title>
        <authorList>
            <person name="Zhou H."/>
            <person name="Di Palma S."/>
            <person name="Preisinger C."/>
            <person name="Peng M."/>
            <person name="Polat A.N."/>
            <person name="Heck A.J."/>
            <person name="Mohammed S."/>
        </authorList>
    </citation>
    <scope>PHOSPHORYLATION [LARGE SCALE ANALYSIS] AT SER-170</scope>
    <scope>IDENTIFICATION BY MASS SPECTROMETRY [LARGE SCALE ANALYSIS]</scope>
    <source>
        <tissue>Cervix carcinoma</tissue>
        <tissue>Erythroleukemia</tissue>
    </source>
</reference>
<reference key="13">
    <citation type="journal article" date="2014" name="Dev. Cell">
        <title>Microtubule minus-end stabilization by polymerization-driven CAMSAP deposition.</title>
        <authorList>
            <person name="Jiang K."/>
            <person name="Hua S."/>
            <person name="Mohan R."/>
            <person name="Grigoriev I."/>
            <person name="Yau K.W."/>
            <person name="Liu Q."/>
            <person name="Katrukha E.A."/>
            <person name="Altelaar A.F."/>
            <person name="Heck A.J."/>
            <person name="Hoogenraad C.C."/>
            <person name="Akhmanova A."/>
        </authorList>
    </citation>
    <scope>INTERACTION WITH CAMSAP2 AND CAMSAP3</scope>
</reference>
<reference key="14">
    <citation type="journal article" date="2017" name="J. Cell Sci.">
        <title>CAMSAP3 accumulates in the pericentrosomal area and accompanies microtubule release from the centrosome via katanin.</title>
        <authorList>
            <person name="Dong C."/>
            <person name="Xu H."/>
            <person name="Zhang R."/>
            <person name="Tanaka N."/>
            <person name="Takeichi M."/>
            <person name="Meng W."/>
        </authorList>
    </citation>
    <scope>INTERACTION WITH CAMSAP3</scope>
</reference>
<reference key="15">
    <citation type="journal article" date="2016" name="Mol. Cell. Proteomics">
        <title>Proteomic analysis of the mammalian Katanin family of microtubule-severing enzymes defines Katanin p80 subunit B-like 1 (KATNBL1) as a regulator of mammalian Katanin microtubule-severing.</title>
        <authorList>
            <person name="Cheung K."/>
            <person name="Senese S."/>
            <person name="Kuang J."/>
            <person name="Bui N."/>
            <person name="Ongpipattanakul C."/>
            <person name="Gholkar A."/>
            <person name="Cohn W."/>
            <person name="Capri J."/>
            <person name="Whitelegge J.P."/>
            <person name="Torres J.Z."/>
        </authorList>
    </citation>
    <scope>INTERACTION WITH KATNB1 AND KATNBL1</scope>
    <scope>SUBCELLULAR LOCATION</scope>
</reference>
<organism>
    <name type="scientific">Homo sapiens</name>
    <name type="common">Human</name>
    <dbReference type="NCBI Taxonomy" id="9606"/>
    <lineage>
        <taxon>Eukaryota</taxon>
        <taxon>Metazoa</taxon>
        <taxon>Chordata</taxon>
        <taxon>Craniata</taxon>
        <taxon>Vertebrata</taxon>
        <taxon>Euteleostomi</taxon>
        <taxon>Mammalia</taxon>
        <taxon>Eutheria</taxon>
        <taxon>Euarchontoglires</taxon>
        <taxon>Primates</taxon>
        <taxon>Haplorrhini</taxon>
        <taxon>Catarrhini</taxon>
        <taxon>Hominidae</taxon>
        <taxon>Homo</taxon>
    </lineage>
</organism>
<feature type="chain" id="PRO_0000084594" description="Katanin p60 ATPase-containing subunit A1">
    <location>
        <begin position="1"/>
        <end position="491"/>
    </location>
</feature>
<feature type="region of interest" description="Interaction with microtubules">
    <location>
        <begin position="1"/>
        <end position="185"/>
    </location>
</feature>
<feature type="region of interest" description="Interaction with dynein and NDEL1" evidence="1">
    <location>
        <begin position="1"/>
        <end position="75"/>
    </location>
</feature>
<feature type="region of interest" description="Interaction with KATNB1" evidence="5">
    <location>
        <begin position="1"/>
        <end position="29"/>
    </location>
</feature>
<feature type="region of interest" description="Disordered" evidence="4">
    <location>
        <begin position="87"/>
        <end position="185"/>
    </location>
</feature>
<feature type="compositionally biased region" description="Polar residues" evidence="4">
    <location>
        <begin position="117"/>
        <end position="144"/>
    </location>
</feature>
<feature type="compositionally biased region" description="Basic and acidic residues" evidence="4">
    <location>
        <begin position="145"/>
        <end position="169"/>
    </location>
</feature>
<feature type="binding site" evidence="3">
    <location>
        <begin position="249"/>
        <end position="256"/>
    </location>
    <ligand>
        <name>ATP</name>
        <dbReference type="ChEBI" id="CHEBI:30616"/>
    </ligand>
</feature>
<feature type="modified residue" description="Phosphoserine; by DYRK2" evidence="3 8">
    <location>
        <position position="42"/>
    </location>
</feature>
<feature type="modified residue" description="Phosphoserine; by DYRK2" evidence="3 8">
    <location>
        <position position="109"/>
    </location>
</feature>
<feature type="modified residue" description="Phosphothreonine; by DYRK2" evidence="3 8">
    <location>
        <position position="133"/>
    </location>
</feature>
<feature type="modified residue" description="Phosphoserine" evidence="14 15 16">
    <location>
        <position position="170"/>
    </location>
</feature>
<feature type="splice variant" id="VSP_012948" description="In isoform 2." evidence="13">
    <location>
        <begin position="168"/>
        <end position="243"/>
    </location>
</feature>
<feature type="splice variant" id="VSP_012949" description="In isoform 2." evidence="13">
    <original>AKGR</original>
    <variation>GMRP</variation>
    <location>
        <begin position="384"/>
        <end position="387"/>
    </location>
</feature>
<feature type="splice variant" id="VSP_012950" description="In isoform 2." evidence="13">
    <location>
        <begin position="388"/>
        <end position="491"/>
    </location>
</feature>
<feature type="mutagenesis site" description="Abolishes ATP dependent microtubule severing activity and localization to spindle poles." evidence="5 6">
    <original>K</original>
    <variation>A</variation>
    <location>
        <position position="255"/>
    </location>
</feature>
<feature type="mutagenesis site" description="Abolishes ATP dependent microtubule severing activity and localization to spindle poles; when associated with N-309." evidence="5">
    <original>D</original>
    <variation>N</variation>
    <location>
        <position position="308"/>
    </location>
</feature>
<feature type="mutagenesis site" description="Abolishes ATP dependent microtubule severing activity and localization to spindle poles; when associated with N-308." evidence="5">
    <original>E</original>
    <variation>N</variation>
    <location>
        <position position="309"/>
    </location>
</feature>
<feature type="helix" evidence="18">
    <location>
        <begin position="189"/>
        <end position="198"/>
    </location>
</feature>
<feature type="strand" evidence="18">
    <location>
        <begin position="200"/>
        <end position="203"/>
    </location>
</feature>
<feature type="helix" evidence="18">
    <location>
        <begin position="208"/>
        <end position="210"/>
    </location>
</feature>
<feature type="helix" evidence="18">
    <location>
        <begin position="215"/>
        <end position="224"/>
    </location>
</feature>
<feature type="helix" evidence="18">
    <location>
        <begin position="226"/>
        <end position="230"/>
    </location>
</feature>
<feature type="turn" evidence="18">
    <location>
        <begin position="232"/>
        <end position="234"/>
    </location>
</feature>
<feature type="strand" evidence="18">
    <location>
        <begin position="236"/>
        <end position="238"/>
    </location>
</feature>
<feature type="strand" evidence="18">
    <location>
        <begin position="243"/>
        <end position="248"/>
    </location>
</feature>
<feature type="strand" evidence="18">
    <location>
        <begin position="250"/>
        <end position="254"/>
    </location>
</feature>
<feature type="helix" evidence="18">
    <location>
        <begin position="255"/>
        <end position="265"/>
    </location>
</feature>
<feature type="strand" evidence="18">
    <location>
        <begin position="269"/>
        <end position="274"/>
    </location>
</feature>
<feature type="helix" evidence="18">
    <location>
        <begin position="275"/>
        <end position="279"/>
    </location>
</feature>
<feature type="helix" evidence="18">
    <location>
        <begin position="288"/>
        <end position="299"/>
    </location>
</feature>
<feature type="strand" evidence="18">
    <location>
        <begin position="301"/>
        <end position="308"/>
    </location>
</feature>
<feature type="helix" evidence="18">
    <location>
        <begin position="310"/>
        <end position="313"/>
    </location>
</feature>
<feature type="helix" evidence="18">
    <location>
        <begin position="323"/>
        <end position="337"/>
    </location>
</feature>
<feature type="strand" evidence="18">
    <location>
        <begin position="353"/>
        <end position="360"/>
    </location>
</feature>
<feature type="helix" evidence="17">
    <location>
        <begin position="362"/>
        <end position="364"/>
    </location>
</feature>
<feature type="helix" evidence="18">
    <location>
        <begin position="367"/>
        <end position="370"/>
    </location>
</feature>
<feature type="strand" evidence="18">
    <location>
        <begin position="375"/>
        <end position="378"/>
    </location>
</feature>
<feature type="helix" evidence="18">
    <location>
        <begin position="384"/>
        <end position="394"/>
    </location>
</feature>
<feature type="helix" evidence="18">
    <location>
        <begin position="404"/>
        <end position="411"/>
    </location>
</feature>
<feature type="helix" evidence="18">
    <location>
        <begin position="418"/>
        <end position="435"/>
    </location>
</feature>
<feature type="turn" evidence="18">
    <location>
        <begin position="436"/>
        <end position="439"/>
    </location>
</feature>
<feature type="turn" evidence="18">
    <location>
        <begin position="443"/>
        <end position="445"/>
    </location>
</feature>
<feature type="helix" evidence="18">
    <location>
        <begin position="450"/>
        <end position="452"/>
    </location>
</feature>
<feature type="helix" evidence="18">
    <location>
        <begin position="459"/>
        <end position="468"/>
    </location>
</feature>
<feature type="helix" evidence="18">
    <location>
        <begin position="475"/>
        <end position="488"/>
    </location>
</feature>
<comment type="function">
    <text evidence="3 5 6 8">Catalytic subunit of a complex which severs microtubules in an ATP-dependent manner. Microtubule severing may promote rapid reorganization of cellular microtubule arrays and the release of microtubules from the centrosome following nucleation. Microtubule release from the mitotic spindle poles may allow depolymerization of the microtubule end proximal to the spindle pole, leading to poleward microtubule flux and poleward motion of chromosome. Microtubule release within the cell body of neurons may be required for their transport into neuronal processes by microtubule-dependent motor proteins. This transport is required for axonal growth.</text>
</comment>
<comment type="catalytic activity">
    <reaction evidence="3">
        <text>n ATP + n H2O + a microtubule = n ADP + n phosphate + (n+1) alpha/beta tubulin heterodimers.</text>
        <dbReference type="EC" id="5.6.1.1"/>
    </reaction>
</comment>
<comment type="activity regulation">
    <text evidence="3">ATPase activity is stimulated by microtubules, which promote homooligomerization. ATP-dependent microtubule severing is stimulated by interaction with KATNB1.</text>
</comment>
<comment type="subunit">
    <text evidence="2 5 7 8 9 10 11">Can homooligomerize into hexameric rings, which may be promoted by interaction with microtubules. Interacts with KATNB1, which may serve as a targeting subunit (PubMed:10751153). Interacts with ASPM; the katanin complex formation KATNA1:KATNB1 is required for the association of ASPM (By similarity). Interacts with dynein and NDEL1. Associates with the E3 ligase complex containing DYRK2, EDD/UBR5, DDB1 and DCAF1 proteins (EDVP complex) (PubMed:19287380). Interacts with KLHL42 (via the kelch domains). Interacts with CUL3; the interaction is enhanced by KLHL42 (PubMed:19261606). Interacts with KATNB1 and KATNBL1 (PubMed:26929214). Interacts with CAMSAP2 and CAMSAP3; leading to regulate the length of CAMSAP-decorated microtubule stretches (PubMed:24486153, PubMed:28386021).</text>
</comment>
<comment type="interaction">
    <interactant intactId="EBI-1048692">
        <id>O75449</id>
    </interactant>
    <interactant intactId="EBI-11147603">
        <id>Q9BVA0</id>
        <label>KATNB1</label>
    </interactant>
    <organismsDiffer>false</organismsDiffer>
    <experiments>12</experiments>
</comment>
<comment type="interaction">
    <interactant intactId="EBI-1048692">
        <id>O75449</id>
    </interactant>
    <interactant intactId="EBI-715394">
        <id>Q9H079</id>
        <label>KATNBL1</label>
    </interactant>
    <organismsDiffer>false</organismsDiffer>
    <experiments>12</experiments>
</comment>
<comment type="subcellular location">
    <subcellularLocation>
        <location evidence="5 10 12">Cytoplasm</location>
    </subcellularLocation>
    <subcellularLocation>
        <location evidence="7">Midbody</location>
    </subcellularLocation>
    <subcellularLocation>
        <location evidence="3">Cytoplasm</location>
        <location evidence="3">Cytoskeleton</location>
        <location evidence="3">Microtubule organizing center</location>
        <location evidence="3">Centrosome</location>
    </subcellularLocation>
    <subcellularLocation>
        <location evidence="5 10 12">Cytoplasm</location>
        <location evidence="5 10 12">Cytoskeleton</location>
        <location evidence="5 10 12">Spindle pole</location>
    </subcellularLocation>
    <subcellularLocation>
        <location evidence="10">Cytoplasm</location>
        <location evidence="10">Cytoskeleton</location>
        <location evidence="10">Spindle</location>
    </subcellularLocation>
    <text evidence="3 5 7 10 12">Predominantly cytoplasmic (PubMed:9658175). Localized diffusely in the cytoplasm during the interphase (PubMed:10751153). During metaphase is localized throughout the cell and more widely dispersed than the microtubules. In anaphase and telophase is localized at the midbody region (PubMed:19261606). Also localized to the interphase centrosome and the mitotic spindle poles (By similarity). Enhanced recruitment to the mitotic spindle poles requires microtubules and interaction with KATNB1 (PubMed:10751153). Localizes within the cytoplasm, partially overlapping with microtubules, in interphase and to the mitotic spindle and spindle poles during mitosis (PubMed:26929214).</text>
</comment>
<comment type="alternative products">
    <event type="alternative splicing"/>
    <isoform>
        <id>O75449-1</id>
        <name>1</name>
        <sequence type="displayed"/>
    </isoform>
    <isoform>
        <id>O75449-2</id>
        <name>2</name>
        <sequence type="described" ref="VSP_012948 VSP_012949 VSP_012950"/>
    </isoform>
</comment>
<comment type="domain">
    <text evidence="3">The N-terminus is sufficient for interaction with microtubules, although high affinity binding to microtubules also requires an intact C-terminal domain and ATP, which promotes oligomerization.</text>
</comment>
<comment type="PTM">
    <text evidence="3 7 8">Phosphorylation by DYRK2 triggers ubiquitination and subsequent degradation.</text>
</comment>
<comment type="PTM">
    <text evidence="3 7">Ubiquitinated by the BCR(KLHL42) E3 ubiquitin ligase complex, leading to its proteasomal degradation. Ubiquitinated by the EDVP E3 ligase complex and subsequently targeted for proteasomal degradation.</text>
</comment>
<comment type="similarity">
    <text evidence="3">Belongs to the AAA ATPase family. Katanin p60 subunit A1 subfamily.</text>
</comment>
<accession>O75449</accession>
<accession>E1P5A3</accession>
<accession>Q5TFA8</accession>
<accession>Q5TFA9</accession>
<accession>Q86VN2</accession>
<accession>Q9NU52</accession>
<keyword id="KW-0002">3D-structure</keyword>
<keyword id="KW-0025">Alternative splicing</keyword>
<keyword id="KW-0067">ATP-binding</keyword>
<keyword id="KW-0131">Cell cycle</keyword>
<keyword id="KW-0132">Cell division</keyword>
<keyword id="KW-0963">Cytoplasm</keyword>
<keyword id="KW-0206">Cytoskeleton</keyword>
<keyword id="KW-0413">Isomerase</keyword>
<keyword id="KW-0493">Microtubule</keyword>
<keyword id="KW-0498">Mitosis</keyword>
<keyword id="KW-0547">Nucleotide-binding</keyword>
<keyword id="KW-0597">Phosphoprotein</keyword>
<keyword id="KW-1267">Proteomics identification</keyword>
<keyword id="KW-1185">Reference proteome</keyword>
<keyword id="KW-0832">Ubl conjugation</keyword>
<protein>
    <recommendedName>
        <fullName evidence="3">Katanin p60 ATPase-containing subunit A1</fullName>
        <shortName evidence="3">Katanin p60 subunit A1</shortName>
        <ecNumber evidence="3">5.6.1.1</ecNumber>
    </recommendedName>
    <alternativeName>
        <fullName evidence="3">p60 katanin</fullName>
    </alternativeName>
</protein>